<protein>
    <recommendedName>
        <fullName evidence="1">Ribosomal protein L11 methyltransferase</fullName>
        <shortName evidence="1">L11 Mtase</shortName>
        <ecNumber evidence="1">2.1.1.-</ecNumber>
    </recommendedName>
</protein>
<dbReference type="EC" id="2.1.1.-" evidence="1"/>
<dbReference type="EMBL" id="CP000127">
    <property type="protein sequence ID" value="ABA57558.1"/>
    <property type="molecule type" value="Genomic_DNA"/>
</dbReference>
<dbReference type="RefSeq" id="WP_002808908.1">
    <property type="nucleotide sequence ID" value="NC_007484.1"/>
</dbReference>
<dbReference type="SMR" id="Q3JC88"/>
<dbReference type="FunCoup" id="Q3JC88">
    <property type="interactions" value="441"/>
</dbReference>
<dbReference type="STRING" id="323261.Noc_1050"/>
<dbReference type="KEGG" id="noc:Noc_1050"/>
<dbReference type="eggNOG" id="COG2264">
    <property type="taxonomic scope" value="Bacteria"/>
</dbReference>
<dbReference type="HOGENOM" id="CLU_049382_4_1_6"/>
<dbReference type="InParanoid" id="Q3JC88"/>
<dbReference type="Proteomes" id="UP000006838">
    <property type="component" value="Chromosome"/>
</dbReference>
<dbReference type="GO" id="GO:0005829">
    <property type="term" value="C:cytosol"/>
    <property type="evidence" value="ECO:0007669"/>
    <property type="project" value="TreeGrafter"/>
</dbReference>
<dbReference type="GO" id="GO:0016279">
    <property type="term" value="F:protein-lysine N-methyltransferase activity"/>
    <property type="evidence" value="ECO:0007669"/>
    <property type="project" value="TreeGrafter"/>
</dbReference>
<dbReference type="GO" id="GO:0032259">
    <property type="term" value="P:methylation"/>
    <property type="evidence" value="ECO:0007669"/>
    <property type="project" value="UniProtKB-KW"/>
</dbReference>
<dbReference type="CDD" id="cd02440">
    <property type="entry name" value="AdoMet_MTases"/>
    <property type="match status" value="1"/>
</dbReference>
<dbReference type="Gene3D" id="3.40.50.150">
    <property type="entry name" value="Vaccinia Virus protein VP39"/>
    <property type="match status" value="1"/>
</dbReference>
<dbReference type="HAMAP" id="MF_00735">
    <property type="entry name" value="Methyltr_PrmA"/>
    <property type="match status" value="1"/>
</dbReference>
<dbReference type="InterPro" id="IPR050078">
    <property type="entry name" value="Ribosomal_L11_MeTrfase_PrmA"/>
</dbReference>
<dbReference type="InterPro" id="IPR004498">
    <property type="entry name" value="Ribosomal_PrmA_MeTrfase"/>
</dbReference>
<dbReference type="InterPro" id="IPR029063">
    <property type="entry name" value="SAM-dependent_MTases_sf"/>
</dbReference>
<dbReference type="NCBIfam" id="TIGR00406">
    <property type="entry name" value="prmA"/>
    <property type="match status" value="1"/>
</dbReference>
<dbReference type="PANTHER" id="PTHR43648">
    <property type="entry name" value="ELECTRON TRANSFER FLAVOPROTEIN BETA SUBUNIT LYSINE METHYLTRANSFERASE"/>
    <property type="match status" value="1"/>
</dbReference>
<dbReference type="PANTHER" id="PTHR43648:SF1">
    <property type="entry name" value="ELECTRON TRANSFER FLAVOPROTEIN BETA SUBUNIT LYSINE METHYLTRANSFERASE"/>
    <property type="match status" value="1"/>
</dbReference>
<dbReference type="Pfam" id="PF06325">
    <property type="entry name" value="PrmA"/>
    <property type="match status" value="1"/>
</dbReference>
<dbReference type="PIRSF" id="PIRSF000401">
    <property type="entry name" value="RPL11_MTase"/>
    <property type="match status" value="1"/>
</dbReference>
<dbReference type="SUPFAM" id="SSF53335">
    <property type="entry name" value="S-adenosyl-L-methionine-dependent methyltransferases"/>
    <property type="match status" value="1"/>
</dbReference>
<organism>
    <name type="scientific">Nitrosococcus oceani (strain ATCC 19707 / BCRC 17464 / JCM 30415 / NCIMB 11848 / C-107)</name>
    <dbReference type="NCBI Taxonomy" id="323261"/>
    <lineage>
        <taxon>Bacteria</taxon>
        <taxon>Pseudomonadati</taxon>
        <taxon>Pseudomonadota</taxon>
        <taxon>Gammaproteobacteria</taxon>
        <taxon>Chromatiales</taxon>
        <taxon>Chromatiaceae</taxon>
        <taxon>Nitrosococcus</taxon>
    </lineage>
</organism>
<accession>Q3JC88</accession>
<sequence>MPWIQFQLEVSAGQVERLSDQLSEAGAVAVTLLDATDQPLFEPPPGETPLWSRTRVNALFPMASDPDTLLQELKQDWAPESFPSYRWEILADQNWERAWMDHFKPLRFGSQLWVCPSWLPPPEPEAVNLLLDPGLAFGTGTHPTTALCLEWLTNANLNQACIIDYGCGSGILAIAALKLGATAAVAVDHDPQALLATQENATHNGVISQLQVSSPSELIEIKADFLVANILAEPLLRLASLFARLTYPGAYLILSGITSDQIQQILQTYNNWFTFNTPMIKENWVLLAGHRR</sequence>
<reference key="1">
    <citation type="journal article" date="2006" name="Appl. Environ. Microbiol.">
        <title>Complete genome sequence of the marine, chemolithoautotrophic, ammonia-oxidizing bacterium Nitrosococcus oceani ATCC 19707.</title>
        <authorList>
            <person name="Klotz M.G."/>
            <person name="Arp D.J."/>
            <person name="Chain P.S.G."/>
            <person name="El-Sheikh A.F."/>
            <person name="Hauser L.J."/>
            <person name="Hommes N.G."/>
            <person name="Larimer F.W."/>
            <person name="Malfatti S.A."/>
            <person name="Norton J.M."/>
            <person name="Poret-Peterson A.T."/>
            <person name="Vergez L.M."/>
            <person name="Ward B.B."/>
        </authorList>
    </citation>
    <scope>NUCLEOTIDE SEQUENCE [LARGE SCALE GENOMIC DNA]</scope>
    <source>
        <strain>ATCC 19707 / BCRC 17464 / JCM 30415 / NCIMB 11848 / C-107</strain>
    </source>
</reference>
<feature type="chain" id="PRO_1000083355" description="Ribosomal protein L11 methyltransferase">
    <location>
        <begin position="1"/>
        <end position="292"/>
    </location>
</feature>
<feature type="binding site" evidence="1">
    <location>
        <position position="145"/>
    </location>
    <ligand>
        <name>S-adenosyl-L-methionine</name>
        <dbReference type="ChEBI" id="CHEBI:59789"/>
    </ligand>
</feature>
<feature type="binding site" evidence="1">
    <location>
        <position position="166"/>
    </location>
    <ligand>
        <name>S-adenosyl-L-methionine</name>
        <dbReference type="ChEBI" id="CHEBI:59789"/>
    </ligand>
</feature>
<feature type="binding site" evidence="1">
    <location>
        <position position="188"/>
    </location>
    <ligand>
        <name>S-adenosyl-L-methionine</name>
        <dbReference type="ChEBI" id="CHEBI:59789"/>
    </ligand>
</feature>
<feature type="binding site" evidence="1">
    <location>
        <position position="229"/>
    </location>
    <ligand>
        <name>S-adenosyl-L-methionine</name>
        <dbReference type="ChEBI" id="CHEBI:59789"/>
    </ligand>
</feature>
<proteinExistence type="inferred from homology"/>
<gene>
    <name evidence="1" type="primary">prmA</name>
    <name type="ordered locus">Noc_1050</name>
</gene>
<evidence type="ECO:0000255" key="1">
    <source>
        <dbReference type="HAMAP-Rule" id="MF_00735"/>
    </source>
</evidence>
<keyword id="KW-0963">Cytoplasm</keyword>
<keyword id="KW-0489">Methyltransferase</keyword>
<keyword id="KW-1185">Reference proteome</keyword>
<keyword id="KW-0949">S-adenosyl-L-methionine</keyword>
<keyword id="KW-0808">Transferase</keyword>
<name>PRMA_NITOC</name>
<comment type="function">
    <text evidence="1">Methylates ribosomal protein L11.</text>
</comment>
<comment type="catalytic activity">
    <reaction evidence="1">
        <text>L-lysyl-[protein] + 3 S-adenosyl-L-methionine = N(6),N(6),N(6)-trimethyl-L-lysyl-[protein] + 3 S-adenosyl-L-homocysteine + 3 H(+)</text>
        <dbReference type="Rhea" id="RHEA:54192"/>
        <dbReference type="Rhea" id="RHEA-COMP:9752"/>
        <dbReference type="Rhea" id="RHEA-COMP:13826"/>
        <dbReference type="ChEBI" id="CHEBI:15378"/>
        <dbReference type="ChEBI" id="CHEBI:29969"/>
        <dbReference type="ChEBI" id="CHEBI:57856"/>
        <dbReference type="ChEBI" id="CHEBI:59789"/>
        <dbReference type="ChEBI" id="CHEBI:61961"/>
    </reaction>
</comment>
<comment type="subcellular location">
    <subcellularLocation>
        <location evidence="1">Cytoplasm</location>
    </subcellularLocation>
</comment>
<comment type="similarity">
    <text evidence="1">Belongs to the methyltransferase superfamily. PrmA family.</text>
</comment>